<keyword id="KW-1185">Reference proteome</keyword>
<keyword id="KW-0687">Ribonucleoprotein</keyword>
<keyword id="KW-0689">Ribosomal protein</keyword>
<name>RL17_HALH5</name>
<proteinExistence type="inferred from homology"/>
<evidence type="ECO:0000255" key="1">
    <source>
        <dbReference type="HAMAP-Rule" id="MF_01368"/>
    </source>
</evidence>
<evidence type="ECO:0000305" key="2"/>
<protein>
    <recommendedName>
        <fullName evidence="1">Large ribosomal subunit protein bL17</fullName>
    </recommendedName>
    <alternativeName>
        <fullName evidence="2">50S ribosomal protein L17</fullName>
    </alternativeName>
</protein>
<sequence>MAYAKLGRDSAARKALLRDLATDLIINERIETTEAKAKELRSVVEKMITLGKRGDLHARRQAAAFIRREVADEETGQDAIQKLFSDIAPRYEDRQGGYTRVLKVGPRRGDGAPMAIIELV</sequence>
<organism>
    <name type="scientific">Halalkalibacterium halodurans (strain ATCC BAA-125 / DSM 18197 / FERM 7344 / JCM 9153 / C-125)</name>
    <name type="common">Bacillus halodurans</name>
    <dbReference type="NCBI Taxonomy" id="272558"/>
    <lineage>
        <taxon>Bacteria</taxon>
        <taxon>Bacillati</taxon>
        <taxon>Bacillota</taxon>
        <taxon>Bacilli</taxon>
        <taxon>Bacillales</taxon>
        <taxon>Bacillaceae</taxon>
        <taxon>Halalkalibacterium (ex Joshi et al. 2022)</taxon>
    </lineage>
</organism>
<accession>O50635</accession>
<accession>Q9JPW2</accession>
<accession>Q9WWJ4</accession>
<comment type="subunit">
    <text evidence="1">Part of the 50S ribosomal subunit. Contacts protein L32.</text>
</comment>
<comment type="similarity">
    <text evidence="1">Belongs to the bacterial ribosomal protein bL17 family.</text>
</comment>
<feature type="chain" id="PRO_0000175513" description="Large ribosomal subunit protein bL17">
    <location>
        <begin position="1"/>
        <end position="120"/>
    </location>
</feature>
<reference key="1">
    <citation type="journal article" date="1999" name="Biosci. Biotechnol. Biochem.">
        <title>Sequence analysis of a 32-kb region including the major ribosomal protein gene clusters from alkaliphilic Bacillus sp. strain C-125.</title>
        <authorList>
            <person name="Takami H."/>
            <person name="Takaki Y."/>
            <person name="Nakasone K."/>
            <person name="Hirama C."/>
            <person name="Inoue A."/>
            <person name="Horikoshi K."/>
        </authorList>
    </citation>
    <scope>NUCLEOTIDE SEQUENCE [GENOMIC DNA]</scope>
    <source>
        <strain>ATCC BAA-125 / DSM 18197 / FERM 7344 / JCM 9153 / C-125</strain>
    </source>
</reference>
<reference key="2">
    <citation type="journal article" date="2000" name="Nucleic Acids Res.">
        <title>Complete genome sequence of the alkaliphilic bacterium Bacillus halodurans and genomic sequence comparison with Bacillus subtilis.</title>
        <authorList>
            <person name="Takami H."/>
            <person name="Nakasone K."/>
            <person name="Takaki Y."/>
            <person name="Maeno G."/>
            <person name="Sasaki R."/>
            <person name="Masui N."/>
            <person name="Fuji F."/>
            <person name="Hirama C."/>
            <person name="Nakamura Y."/>
            <person name="Ogasawara N."/>
            <person name="Kuhara S."/>
            <person name="Horikoshi K."/>
        </authorList>
    </citation>
    <scope>NUCLEOTIDE SEQUENCE [LARGE SCALE GENOMIC DNA]</scope>
    <source>
        <strain>ATCC BAA-125 / DSM 18197 / FERM 7344 / JCM 9153 / C-125</strain>
    </source>
</reference>
<reference key="3">
    <citation type="journal article" date="1998" name="FEMS Microbiol. Lett.">
        <title>Cloning and expression of the gene encoding RNA polymerase alpha subunit from alkaliphilic Bacillus sp. strain C-125.</title>
        <authorList>
            <person name="Nakasone K."/>
            <person name="Takaki Y."/>
            <person name="Takami H."/>
            <person name="Inoue A."/>
            <person name="Horikoshi K."/>
        </authorList>
    </citation>
    <scope>NUCLEOTIDE SEQUENCE [GENOMIC DNA] OF 1-83</scope>
    <source>
        <strain>ATCC BAA-125 / DSM 18197 / FERM 7344 / JCM 9153 / C-125</strain>
    </source>
</reference>
<gene>
    <name evidence="1" type="primary">rplQ</name>
    <name type="ordered locus">BH0163</name>
</gene>
<dbReference type="EMBL" id="AB017508">
    <property type="protein sequence ID" value="BAA75299.1"/>
    <property type="molecule type" value="Genomic_DNA"/>
</dbReference>
<dbReference type="EMBL" id="BA000004">
    <property type="protein sequence ID" value="BAB03882.1"/>
    <property type="molecule type" value="Genomic_DNA"/>
</dbReference>
<dbReference type="EMBL" id="AB010082">
    <property type="protein sequence ID" value="BAA24195.1"/>
    <property type="molecule type" value="Genomic_DNA"/>
</dbReference>
<dbReference type="PIR" id="T44411">
    <property type="entry name" value="T44411"/>
</dbReference>
<dbReference type="RefSeq" id="WP_010896345.1">
    <property type="nucleotide sequence ID" value="NC_002570.2"/>
</dbReference>
<dbReference type="SMR" id="O50635"/>
<dbReference type="STRING" id="272558.gene:10726003"/>
<dbReference type="GeneID" id="87595704"/>
<dbReference type="KEGG" id="bha:BH0163"/>
<dbReference type="eggNOG" id="COG0203">
    <property type="taxonomic scope" value="Bacteria"/>
</dbReference>
<dbReference type="HOGENOM" id="CLU_074407_2_2_9"/>
<dbReference type="OrthoDB" id="9809073at2"/>
<dbReference type="Proteomes" id="UP000001258">
    <property type="component" value="Chromosome"/>
</dbReference>
<dbReference type="GO" id="GO:0022625">
    <property type="term" value="C:cytosolic large ribosomal subunit"/>
    <property type="evidence" value="ECO:0007669"/>
    <property type="project" value="TreeGrafter"/>
</dbReference>
<dbReference type="GO" id="GO:0003735">
    <property type="term" value="F:structural constituent of ribosome"/>
    <property type="evidence" value="ECO:0007669"/>
    <property type="project" value="InterPro"/>
</dbReference>
<dbReference type="GO" id="GO:0006412">
    <property type="term" value="P:translation"/>
    <property type="evidence" value="ECO:0007669"/>
    <property type="project" value="UniProtKB-UniRule"/>
</dbReference>
<dbReference type="FunFam" id="3.90.1030.10:FF:000002">
    <property type="entry name" value="50S ribosomal protein L17"/>
    <property type="match status" value="1"/>
</dbReference>
<dbReference type="Gene3D" id="3.90.1030.10">
    <property type="entry name" value="Ribosomal protein L17"/>
    <property type="match status" value="1"/>
</dbReference>
<dbReference type="HAMAP" id="MF_01368">
    <property type="entry name" value="Ribosomal_bL17"/>
    <property type="match status" value="1"/>
</dbReference>
<dbReference type="InterPro" id="IPR000456">
    <property type="entry name" value="Ribosomal_bL17"/>
</dbReference>
<dbReference type="InterPro" id="IPR047859">
    <property type="entry name" value="Ribosomal_bL17_CS"/>
</dbReference>
<dbReference type="InterPro" id="IPR036373">
    <property type="entry name" value="Ribosomal_bL17_sf"/>
</dbReference>
<dbReference type="NCBIfam" id="TIGR00059">
    <property type="entry name" value="L17"/>
    <property type="match status" value="1"/>
</dbReference>
<dbReference type="PANTHER" id="PTHR14413:SF16">
    <property type="entry name" value="LARGE RIBOSOMAL SUBUNIT PROTEIN BL17M"/>
    <property type="match status" value="1"/>
</dbReference>
<dbReference type="PANTHER" id="PTHR14413">
    <property type="entry name" value="RIBOSOMAL PROTEIN L17"/>
    <property type="match status" value="1"/>
</dbReference>
<dbReference type="Pfam" id="PF01196">
    <property type="entry name" value="Ribosomal_L17"/>
    <property type="match status" value="1"/>
</dbReference>
<dbReference type="SUPFAM" id="SSF64263">
    <property type="entry name" value="Prokaryotic ribosomal protein L17"/>
    <property type="match status" value="1"/>
</dbReference>
<dbReference type="PROSITE" id="PS01167">
    <property type="entry name" value="RIBOSOMAL_L17"/>
    <property type="match status" value="1"/>
</dbReference>